<feature type="chain" id="PRO_1000114353" description="Protein RecA">
    <location>
        <begin position="1"/>
        <end position="340"/>
    </location>
</feature>
<feature type="binding site" evidence="1">
    <location>
        <begin position="74"/>
        <end position="81"/>
    </location>
    <ligand>
        <name>ATP</name>
        <dbReference type="ChEBI" id="CHEBI:30616"/>
    </ligand>
</feature>
<dbReference type="EMBL" id="AP009380">
    <property type="protein sequence ID" value="BAG33576.1"/>
    <property type="molecule type" value="Genomic_DNA"/>
</dbReference>
<dbReference type="RefSeq" id="WP_004584116.1">
    <property type="nucleotide sequence ID" value="NZ_CP025930.1"/>
</dbReference>
<dbReference type="SMR" id="B2RJN1"/>
<dbReference type="GeneID" id="57240117"/>
<dbReference type="KEGG" id="pgn:PGN_1057"/>
<dbReference type="eggNOG" id="COG0468">
    <property type="taxonomic scope" value="Bacteria"/>
</dbReference>
<dbReference type="HOGENOM" id="CLU_040469_1_2_10"/>
<dbReference type="OrthoDB" id="9776733at2"/>
<dbReference type="BioCyc" id="PGIN431947:G1G2V-1194-MONOMER"/>
<dbReference type="Proteomes" id="UP000008842">
    <property type="component" value="Chromosome"/>
</dbReference>
<dbReference type="GO" id="GO:0005829">
    <property type="term" value="C:cytosol"/>
    <property type="evidence" value="ECO:0007669"/>
    <property type="project" value="TreeGrafter"/>
</dbReference>
<dbReference type="GO" id="GO:0005524">
    <property type="term" value="F:ATP binding"/>
    <property type="evidence" value="ECO:0007669"/>
    <property type="project" value="UniProtKB-UniRule"/>
</dbReference>
<dbReference type="GO" id="GO:0016887">
    <property type="term" value="F:ATP hydrolysis activity"/>
    <property type="evidence" value="ECO:0007669"/>
    <property type="project" value="InterPro"/>
</dbReference>
<dbReference type="GO" id="GO:0140664">
    <property type="term" value="F:ATP-dependent DNA damage sensor activity"/>
    <property type="evidence" value="ECO:0007669"/>
    <property type="project" value="InterPro"/>
</dbReference>
<dbReference type="GO" id="GO:0003684">
    <property type="term" value="F:damaged DNA binding"/>
    <property type="evidence" value="ECO:0007669"/>
    <property type="project" value="UniProtKB-UniRule"/>
</dbReference>
<dbReference type="GO" id="GO:0003697">
    <property type="term" value="F:single-stranded DNA binding"/>
    <property type="evidence" value="ECO:0007669"/>
    <property type="project" value="UniProtKB-UniRule"/>
</dbReference>
<dbReference type="GO" id="GO:0006310">
    <property type="term" value="P:DNA recombination"/>
    <property type="evidence" value="ECO:0007669"/>
    <property type="project" value="UniProtKB-UniRule"/>
</dbReference>
<dbReference type="GO" id="GO:0006281">
    <property type="term" value="P:DNA repair"/>
    <property type="evidence" value="ECO:0007669"/>
    <property type="project" value="UniProtKB-UniRule"/>
</dbReference>
<dbReference type="GO" id="GO:0009432">
    <property type="term" value="P:SOS response"/>
    <property type="evidence" value="ECO:0007669"/>
    <property type="project" value="UniProtKB-UniRule"/>
</dbReference>
<dbReference type="CDD" id="cd00983">
    <property type="entry name" value="RecA"/>
    <property type="match status" value="1"/>
</dbReference>
<dbReference type="FunFam" id="3.40.50.300:FF:000087">
    <property type="entry name" value="Recombinase RecA"/>
    <property type="match status" value="1"/>
</dbReference>
<dbReference type="Gene3D" id="3.40.50.300">
    <property type="entry name" value="P-loop containing nucleotide triphosphate hydrolases"/>
    <property type="match status" value="1"/>
</dbReference>
<dbReference type="HAMAP" id="MF_00268">
    <property type="entry name" value="RecA"/>
    <property type="match status" value="1"/>
</dbReference>
<dbReference type="InterPro" id="IPR003593">
    <property type="entry name" value="AAA+_ATPase"/>
</dbReference>
<dbReference type="InterPro" id="IPR013765">
    <property type="entry name" value="DNA_recomb/repair_RecA"/>
</dbReference>
<dbReference type="InterPro" id="IPR020584">
    <property type="entry name" value="DNA_recomb/repair_RecA_CS"/>
</dbReference>
<dbReference type="InterPro" id="IPR027417">
    <property type="entry name" value="P-loop_NTPase"/>
</dbReference>
<dbReference type="InterPro" id="IPR049261">
    <property type="entry name" value="RecA-like_C"/>
</dbReference>
<dbReference type="InterPro" id="IPR049428">
    <property type="entry name" value="RecA-like_N"/>
</dbReference>
<dbReference type="InterPro" id="IPR020588">
    <property type="entry name" value="RecA_ATP-bd"/>
</dbReference>
<dbReference type="InterPro" id="IPR023400">
    <property type="entry name" value="RecA_C_sf"/>
</dbReference>
<dbReference type="InterPro" id="IPR020587">
    <property type="entry name" value="RecA_monomer-monomer_interface"/>
</dbReference>
<dbReference type="NCBIfam" id="TIGR02012">
    <property type="entry name" value="tigrfam_recA"/>
    <property type="match status" value="1"/>
</dbReference>
<dbReference type="PANTHER" id="PTHR45900:SF1">
    <property type="entry name" value="MITOCHONDRIAL DNA REPAIR PROTEIN RECA HOMOLOG-RELATED"/>
    <property type="match status" value="1"/>
</dbReference>
<dbReference type="PANTHER" id="PTHR45900">
    <property type="entry name" value="RECA"/>
    <property type="match status" value="1"/>
</dbReference>
<dbReference type="Pfam" id="PF00154">
    <property type="entry name" value="RecA"/>
    <property type="match status" value="1"/>
</dbReference>
<dbReference type="Pfam" id="PF21096">
    <property type="entry name" value="RecA_C"/>
    <property type="match status" value="1"/>
</dbReference>
<dbReference type="PRINTS" id="PR00142">
    <property type="entry name" value="RECA"/>
</dbReference>
<dbReference type="SMART" id="SM00382">
    <property type="entry name" value="AAA"/>
    <property type="match status" value="1"/>
</dbReference>
<dbReference type="SUPFAM" id="SSF52540">
    <property type="entry name" value="P-loop containing nucleoside triphosphate hydrolases"/>
    <property type="match status" value="1"/>
</dbReference>
<dbReference type="SUPFAM" id="SSF54752">
    <property type="entry name" value="RecA protein, C-terminal domain"/>
    <property type="match status" value="1"/>
</dbReference>
<dbReference type="PROSITE" id="PS00321">
    <property type="entry name" value="RECA_1"/>
    <property type="match status" value="1"/>
</dbReference>
<dbReference type="PROSITE" id="PS50162">
    <property type="entry name" value="RECA_2"/>
    <property type="match status" value="1"/>
</dbReference>
<dbReference type="PROSITE" id="PS50163">
    <property type="entry name" value="RECA_3"/>
    <property type="match status" value="1"/>
</dbReference>
<organism>
    <name type="scientific">Porphyromonas gingivalis (strain ATCC 33277 / DSM 20709 / CIP 103683 / JCM 12257 / NCTC 11834 / 2561)</name>
    <dbReference type="NCBI Taxonomy" id="431947"/>
    <lineage>
        <taxon>Bacteria</taxon>
        <taxon>Pseudomonadati</taxon>
        <taxon>Bacteroidota</taxon>
        <taxon>Bacteroidia</taxon>
        <taxon>Bacteroidales</taxon>
        <taxon>Porphyromonadaceae</taxon>
        <taxon>Porphyromonas</taxon>
    </lineage>
</organism>
<comment type="function">
    <text evidence="1">Can catalyze the hydrolysis of ATP in the presence of single-stranded DNA, the ATP-dependent uptake of single-stranded DNA by duplex DNA, and the ATP-dependent hybridization of homologous single-stranded DNAs. It interacts with LexA causing its activation and leading to its autocatalytic cleavage.</text>
</comment>
<comment type="subcellular location">
    <subcellularLocation>
        <location evidence="1">Cytoplasm</location>
    </subcellularLocation>
</comment>
<comment type="similarity">
    <text evidence="1">Belongs to the RecA family.</text>
</comment>
<reference key="1">
    <citation type="journal article" date="2008" name="DNA Res.">
        <title>Determination of the genome sequence of Porphyromonas gingivalis strain ATCC 33277 and genomic comparison with strain W83 revealed extensive genome rearrangements in P. gingivalis.</title>
        <authorList>
            <person name="Naito M."/>
            <person name="Hirakawa H."/>
            <person name="Yamashita A."/>
            <person name="Ohara N."/>
            <person name="Shoji M."/>
            <person name="Yukitake H."/>
            <person name="Nakayama K."/>
            <person name="Toh H."/>
            <person name="Yoshimura F."/>
            <person name="Kuhara S."/>
            <person name="Hattori M."/>
            <person name="Hayashi T."/>
            <person name="Nakayama K."/>
        </authorList>
    </citation>
    <scope>NUCLEOTIDE SEQUENCE [LARGE SCALE GENOMIC DNA]</scope>
    <source>
        <strain>ATCC 33277 / DSM 20709 / CIP 103683 / JCM 12257 / NCTC 11834 / 2561</strain>
    </source>
</reference>
<evidence type="ECO:0000255" key="1">
    <source>
        <dbReference type="HAMAP-Rule" id="MF_00268"/>
    </source>
</evidence>
<proteinExistence type="inferred from homology"/>
<keyword id="KW-0067">ATP-binding</keyword>
<keyword id="KW-0963">Cytoplasm</keyword>
<keyword id="KW-0227">DNA damage</keyword>
<keyword id="KW-0233">DNA recombination</keyword>
<keyword id="KW-0234">DNA repair</keyword>
<keyword id="KW-0238">DNA-binding</keyword>
<keyword id="KW-0547">Nucleotide-binding</keyword>
<keyword id="KW-0742">SOS response</keyword>
<protein>
    <recommendedName>
        <fullName evidence="1">Protein RecA</fullName>
    </recommendedName>
    <alternativeName>
        <fullName evidence="1">Recombinase A</fullName>
    </alternativeName>
</protein>
<gene>
    <name evidence="1" type="primary">recA</name>
    <name type="ordered locus">PGN_1057</name>
</gene>
<name>RECA_PORG3</name>
<accession>B2RJN1</accession>
<sequence length="340" mass="36888">MAEEKIPTVQDEKKLQALRMATEKIEKTFGKGAIMNMGANTVEDVSVIPSGSIGLDLALGVGGYPRGRIIEIYGPESSGKTTLAIHAIAEAQKAGGLAAIIDAEHAFDRTYAEKLGVNVDNLWIAQPDNGEQALEIAEQLIRSSAVDIIVIDSVAALTPKAEIEGEMGDNKVGLHARLMSQALRKMTGAISKSNTTCIFINQLREKIGVLFGNPETTTGGNALKFYASIRIDIRKSTPIKDGEEIMGHLTKVKVLKNKVAPPFRKAEFDIVFGEGISRSGEIIDLGVELDIIKKSGSWFSYGDTKLGQGREAAKEMIRDNEELAEELTEKIREAIRNKHS</sequence>